<evidence type="ECO:0000255" key="1">
    <source>
        <dbReference type="HAMAP-Rule" id="MF_01859"/>
    </source>
</evidence>
<protein>
    <recommendedName>
        <fullName evidence="1">Ribosomal RNA large subunit methyltransferase G</fullName>
        <ecNumber evidence="1">2.1.1.174</ecNumber>
    </recommendedName>
    <alternativeName>
        <fullName evidence="1">23S rRNA m2G1835 methyltransferase</fullName>
    </alternativeName>
    <alternativeName>
        <fullName evidence="1">rRNA (guanine-N(2)-)-methyltransferase RlmG</fullName>
    </alternativeName>
</protein>
<accession>Q31WU9</accession>
<comment type="function">
    <text evidence="1">Specifically methylates the guanine in position 1835 (m2G1835) of 23S rRNA.</text>
</comment>
<comment type="catalytic activity">
    <reaction evidence="1">
        <text>guanosine(1835) in 23S rRNA + S-adenosyl-L-methionine = N(2)-methylguanosine(1835) in 23S rRNA + S-adenosyl-L-homocysteine + H(+)</text>
        <dbReference type="Rhea" id="RHEA:42744"/>
        <dbReference type="Rhea" id="RHEA-COMP:10217"/>
        <dbReference type="Rhea" id="RHEA-COMP:10218"/>
        <dbReference type="ChEBI" id="CHEBI:15378"/>
        <dbReference type="ChEBI" id="CHEBI:57856"/>
        <dbReference type="ChEBI" id="CHEBI:59789"/>
        <dbReference type="ChEBI" id="CHEBI:74269"/>
        <dbReference type="ChEBI" id="CHEBI:74481"/>
        <dbReference type="EC" id="2.1.1.174"/>
    </reaction>
</comment>
<comment type="subcellular location">
    <subcellularLocation>
        <location evidence="1">Cytoplasm</location>
    </subcellularLocation>
</comment>
<comment type="similarity">
    <text evidence="1">Belongs to the methyltransferase superfamily. RlmG family.</text>
</comment>
<organism>
    <name type="scientific">Shigella boydii serotype 4 (strain Sb227)</name>
    <dbReference type="NCBI Taxonomy" id="300268"/>
    <lineage>
        <taxon>Bacteria</taxon>
        <taxon>Pseudomonadati</taxon>
        <taxon>Pseudomonadota</taxon>
        <taxon>Gammaproteobacteria</taxon>
        <taxon>Enterobacterales</taxon>
        <taxon>Enterobacteriaceae</taxon>
        <taxon>Shigella</taxon>
    </lineage>
</organism>
<proteinExistence type="inferred from homology"/>
<reference key="1">
    <citation type="journal article" date="2005" name="Nucleic Acids Res.">
        <title>Genome dynamics and diversity of Shigella species, the etiologic agents of bacillary dysentery.</title>
        <authorList>
            <person name="Yang F."/>
            <person name="Yang J."/>
            <person name="Zhang X."/>
            <person name="Chen L."/>
            <person name="Jiang Y."/>
            <person name="Yan Y."/>
            <person name="Tang X."/>
            <person name="Wang J."/>
            <person name="Xiong Z."/>
            <person name="Dong J."/>
            <person name="Xue Y."/>
            <person name="Zhu Y."/>
            <person name="Xu X."/>
            <person name="Sun L."/>
            <person name="Chen S."/>
            <person name="Nie H."/>
            <person name="Peng J."/>
            <person name="Xu J."/>
            <person name="Wang Y."/>
            <person name="Yuan Z."/>
            <person name="Wen Y."/>
            <person name="Yao Z."/>
            <person name="Shen Y."/>
            <person name="Qiang B."/>
            <person name="Hou Y."/>
            <person name="Yu J."/>
            <person name="Jin Q."/>
        </authorList>
    </citation>
    <scope>NUCLEOTIDE SEQUENCE [LARGE SCALE GENOMIC DNA]</scope>
    <source>
        <strain>Sb227</strain>
    </source>
</reference>
<sequence length="378" mass="42284">MSHLDNGFRSLTLQRFPATDDVNPLQAWEAADEYLLQQLDDTEIRGPVLILNDAFGALSCALAEHKPYSIGDSYISELATRENLRLNGIDESSVKFLDSTADYPQQPGVVLIKVPKTLALLEQQLRALRKVVTSDTRIIAGAKARDIHTSTLELFEKVLGPTTTTLAWKKARLINCTFNEPPLADAPQTVSWKLEGTDWTIHNHANVFSRTGLDIGARFFMQHLPENLEGEIVDLGCGNGVIGLTLLDKNPQAKVVFVDESPMAVASSRLNVETNMPEALDRSEFMINNALSGVEPFRFNAVLCNPPFHQQHALTDNVAWEMFHHARRCLKINGELYIVANRHLDYFHKLKKIFGNCTTIATNNKFVVLKAVKLGRRR</sequence>
<feature type="chain" id="PRO_0000366522" description="Ribosomal RNA large subunit methyltransferase G">
    <location>
        <begin position="1"/>
        <end position="378"/>
    </location>
</feature>
<name>RLMG_SHIBS</name>
<dbReference type="EC" id="2.1.1.174" evidence="1"/>
<dbReference type="EMBL" id="CP000036">
    <property type="protein sequence ID" value="ABB67459.1"/>
    <property type="molecule type" value="Genomic_DNA"/>
</dbReference>
<dbReference type="RefSeq" id="WP_000018685.1">
    <property type="nucleotide sequence ID" value="NC_007613.1"/>
</dbReference>
<dbReference type="SMR" id="Q31WU9"/>
<dbReference type="GeneID" id="93778903"/>
<dbReference type="KEGG" id="sbo:SBO_2945"/>
<dbReference type="HOGENOM" id="CLU_040288_4_0_6"/>
<dbReference type="Proteomes" id="UP000007067">
    <property type="component" value="Chromosome"/>
</dbReference>
<dbReference type="GO" id="GO:0005737">
    <property type="term" value="C:cytoplasm"/>
    <property type="evidence" value="ECO:0007669"/>
    <property type="project" value="UniProtKB-SubCell"/>
</dbReference>
<dbReference type="GO" id="GO:0052916">
    <property type="term" value="F:23S rRNA (guanine(1835)-N(2))-methyltransferase activity"/>
    <property type="evidence" value="ECO:0007669"/>
    <property type="project" value="UniProtKB-EC"/>
</dbReference>
<dbReference type="GO" id="GO:0003676">
    <property type="term" value="F:nucleic acid binding"/>
    <property type="evidence" value="ECO:0007669"/>
    <property type="project" value="InterPro"/>
</dbReference>
<dbReference type="CDD" id="cd02440">
    <property type="entry name" value="AdoMet_MTases"/>
    <property type="match status" value="1"/>
</dbReference>
<dbReference type="FunFam" id="3.40.50.150:FF:000046">
    <property type="entry name" value="Ribosomal RNA large subunit methyltransferase G"/>
    <property type="match status" value="1"/>
</dbReference>
<dbReference type="FunFam" id="3.40.50.150:FF:000047">
    <property type="entry name" value="Ribosomal RNA large subunit methyltransferase G"/>
    <property type="match status" value="1"/>
</dbReference>
<dbReference type="Gene3D" id="3.40.50.150">
    <property type="entry name" value="Vaccinia Virus protein VP39"/>
    <property type="match status" value="2"/>
</dbReference>
<dbReference type="HAMAP" id="MF_01859">
    <property type="entry name" value="23SrRNA_methyltr_G"/>
    <property type="match status" value="1"/>
</dbReference>
<dbReference type="InterPro" id="IPR002052">
    <property type="entry name" value="DNA_methylase_N6_adenine_CS"/>
</dbReference>
<dbReference type="InterPro" id="IPR017237">
    <property type="entry name" value="rRNA_m2G-MeTrfase_RlmG"/>
</dbReference>
<dbReference type="InterPro" id="IPR046977">
    <property type="entry name" value="RsmC/RlmG"/>
</dbReference>
<dbReference type="InterPro" id="IPR029063">
    <property type="entry name" value="SAM-dependent_MTases_sf"/>
</dbReference>
<dbReference type="InterPro" id="IPR007848">
    <property type="entry name" value="Small_mtfrase_dom"/>
</dbReference>
<dbReference type="NCBIfam" id="NF011577">
    <property type="entry name" value="PRK15001.1"/>
    <property type="match status" value="1"/>
</dbReference>
<dbReference type="PANTHER" id="PTHR47816:SF5">
    <property type="entry name" value="RIBOSOMAL RNA LARGE SUBUNIT METHYLTRANSFERASE G"/>
    <property type="match status" value="1"/>
</dbReference>
<dbReference type="PANTHER" id="PTHR47816">
    <property type="entry name" value="RIBOSOMAL RNA SMALL SUBUNIT METHYLTRANSFERASE C"/>
    <property type="match status" value="1"/>
</dbReference>
<dbReference type="Pfam" id="PF05175">
    <property type="entry name" value="MTS"/>
    <property type="match status" value="1"/>
</dbReference>
<dbReference type="PIRSF" id="PIRSF037565">
    <property type="entry name" value="RRNA_m2G_Mtase_RsmD_prd"/>
    <property type="match status" value="1"/>
</dbReference>
<dbReference type="SUPFAM" id="SSF53335">
    <property type="entry name" value="S-adenosyl-L-methionine-dependent methyltransferases"/>
    <property type="match status" value="1"/>
</dbReference>
<gene>
    <name evidence="1" type="primary">rlmG</name>
    <name type="ordered locus">SBO_2945</name>
</gene>
<keyword id="KW-0963">Cytoplasm</keyword>
<keyword id="KW-0489">Methyltransferase</keyword>
<keyword id="KW-0698">rRNA processing</keyword>
<keyword id="KW-0949">S-adenosyl-L-methionine</keyword>
<keyword id="KW-0808">Transferase</keyword>